<comment type="function">
    <text evidence="1">Cooperates with the reticulon proteins and tubule-shaping DP1 family proteins to generate and maintain the structure of the tubular endoplasmic reticulum network. Has GTPase activity, which is required for its function in ER organization.</text>
</comment>
<comment type="subcellular location">
    <subcellularLocation>
        <location evidence="1">Endoplasmic reticulum membrane</location>
        <topology evidence="1">Multi-pass membrane protein</topology>
    </subcellularLocation>
    <text evidence="1">Enriched in the cortical ER. Concentrated in punctae along the ER tubules.</text>
</comment>
<comment type="similarity">
    <text evidence="2">Belongs to the TRAFAC class dynamin-like GTPase superfamily. GB1/RHD3 GTPase family. RHD3 subfamily.</text>
</comment>
<evidence type="ECO:0000255" key="1">
    <source>
        <dbReference type="HAMAP-Rule" id="MF_03109"/>
    </source>
</evidence>
<evidence type="ECO:0000255" key="2">
    <source>
        <dbReference type="PROSITE-ProRule" id="PRU01052"/>
    </source>
</evidence>
<evidence type="ECO:0000256" key="3">
    <source>
        <dbReference type="SAM" id="MobiDB-lite"/>
    </source>
</evidence>
<feature type="chain" id="PRO_0000155134" description="Protein SEY1">
    <location>
        <begin position="1"/>
        <end position="786"/>
    </location>
</feature>
<feature type="topological domain" description="Cytoplasmic" evidence="1">
    <location>
        <begin position="1"/>
        <end position="684"/>
    </location>
</feature>
<feature type="transmembrane region" description="Helical" evidence="1">
    <location>
        <begin position="685"/>
        <end position="705"/>
    </location>
</feature>
<feature type="topological domain" description="Lumenal" evidence="1">
    <location>
        <begin position="706"/>
        <end position="708"/>
    </location>
</feature>
<feature type="transmembrane region" description="Helical" evidence="1">
    <location>
        <begin position="709"/>
        <end position="729"/>
    </location>
</feature>
<feature type="topological domain" description="Cytoplasmic" evidence="1">
    <location>
        <begin position="730"/>
        <end position="786"/>
    </location>
</feature>
<feature type="domain" description="GB1/RHD3-type G" evidence="2">
    <location>
        <begin position="35"/>
        <end position="262"/>
    </location>
</feature>
<feature type="region of interest" description="Disordered" evidence="3">
    <location>
        <begin position="765"/>
        <end position="786"/>
    </location>
</feature>
<feature type="coiled-coil region" evidence="1">
    <location>
        <begin position="355"/>
        <end position="375"/>
    </location>
</feature>
<feature type="binding site" evidence="1">
    <location>
        <begin position="45"/>
        <end position="52"/>
    </location>
    <ligand>
        <name>GTP</name>
        <dbReference type="ChEBI" id="CHEBI:37565"/>
    </ligand>
</feature>
<sequence length="786" mass="89177">MSDLKEAIQLIDENKQFNPSTLNYFTKCLGDKNVGVKYHVISVFGSQSSGKSTLLNKLFDTKFDTMDAQVKRQQTTRGIWLSHSANIYSSGAANQSIPDFFVLDVEGSDGAERGEDQDFERKAALFALSVSEVLIVNMWENQVGLYQGNNMGLLKTVFEVNLSLFGKNENRHKVALLFVIRDFTGQTPLESLEASLVLELEKMWSQLSKPEGCEDTSFHDFFVPNFFGLGHKVFQPEQFDNDVKSLGDLFVDQDASFFKDEYHTHLPLDGWSLYAENCWEQIENNKDLDLPTQQILVARFKTDEIAAAAYNKFLNDYQSQVTDSLDGKELATVLKTLQSTCIDVDYDPFASRYAKKVYEERRDDLIKQLNTIIDETITNFVTRTTSSLIETFHKNARDRSLKGPFKLKIQSALEKASRTFKTNLAPFSELELLSSMDAYISKFEARVNTEVADLQERELNAIVARFNKGLTIKLKDTILHLLAKPTINVWDDVMKEFTSFLDGSLKKYTNEDGKIDFQTGATTDANDKTEHTLKRNAWSFLDHTVHGYLTEDNVVDIMRNVFNDKFRYDDDGMPKFWKNEAEVDASYRLAKSQALSVLDALAIVKNKDNVEILIPEALLESDGDGSDYEENGGQEEEEAGLYHQQRFSHVLSALQKDKIITKFKQFTDLVIIEAKRSIVNTTERIPLYMYALVVALGWGRIITILRNPATIILSIIVLAGAYFVHKLNLWGPLLQFANQATGQATAVLKQTVRSLVVDEEPKRKILVEPHESEGVDKEPSKNDQHL</sequence>
<reference key="1">
    <citation type="journal article" date="2004" name="Nature">
        <title>Genome evolution in yeasts.</title>
        <authorList>
            <person name="Dujon B."/>
            <person name="Sherman D."/>
            <person name="Fischer G."/>
            <person name="Durrens P."/>
            <person name="Casaregola S."/>
            <person name="Lafontaine I."/>
            <person name="de Montigny J."/>
            <person name="Marck C."/>
            <person name="Neuveglise C."/>
            <person name="Talla E."/>
            <person name="Goffard N."/>
            <person name="Frangeul L."/>
            <person name="Aigle M."/>
            <person name="Anthouard V."/>
            <person name="Babour A."/>
            <person name="Barbe V."/>
            <person name="Barnay S."/>
            <person name="Blanchin S."/>
            <person name="Beckerich J.-M."/>
            <person name="Beyne E."/>
            <person name="Bleykasten C."/>
            <person name="Boisrame A."/>
            <person name="Boyer J."/>
            <person name="Cattolico L."/>
            <person name="Confanioleri F."/>
            <person name="de Daruvar A."/>
            <person name="Despons L."/>
            <person name="Fabre E."/>
            <person name="Fairhead C."/>
            <person name="Ferry-Dumazet H."/>
            <person name="Groppi A."/>
            <person name="Hantraye F."/>
            <person name="Hennequin C."/>
            <person name="Jauniaux N."/>
            <person name="Joyet P."/>
            <person name="Kachouri R."/>
            <person name="Kerrest A."/>
            <person name="Koszul R."/>
            <person name="Lemaire M."/>
            <person name="Lesur I."/>
            <person name="Ma L."/>
            <person name="Muller H."/>
            <person name="Nicaud J.-M."/>
            <person name="Nikolski M."/>
            <person name="Oztas S."/>
            <person name="Ozier-Kalogeropoulos O."/>
            <person name="Pellenz S."/>
            <person name="Potier S."/>
            <person name="Richard G.-F."/>
            <person name="Straub M.-L."/>
            <person name="Suleau A."/>
            <person name="Swennen D."/>
            <person name="Tekaia F."/>
            <person name="Wesolowski-Louvel M."/>
            <person name="Westhof E."/>
            <person name="Wirth B."/>
            <person name="Zeniou-Meyer M."/>
            <person name="Zivanovic Y."/>
            <person name="Bolotin-Fukuhara M."/>
            <person name="Thierry A."/>
            <person name="Bouchier C."/>
            <person name="Caudron B."/>
            <person name="Scarpelli C."/>
            <person name="Gaillardin C."/>
            <person name="Weissenbach J."/>
            <person name="Wincker P."/>
            <person name="Souciet J.-L."/>
        </authorList>
    </citation>
    <scope>NUCLEOTIDE SEQUENCE [LARGE SCALE GENOMIC DNA]</scope>
    <source>
        <strain>ATCC 8585 / CBS 2359 / DSM 70799 / NBRC 1267 / NRRL Y-1140 / WM37</strain>
    </source>
</reference>
<organism>
    <name type="scientific">Kluyveromyces lactis (strain ATCC 8585 / CBS 2359 / DSM 70799 / NBRC 1267 / NRRL Y-1140 / WM37)</name>
    <name type="common">Yeast</name>
    <name type="synonym">Candida sphaerica</name>
    <dbReference type="NCBI Taxonomy" id="284590"/>
    <lineage>
        <taxon>Eukaryota</taxon>
        <taxon>Fungi</taxon>
        <taxon>Dikarya</taxon>
        <taxon>Ascomycota</taxon>
        <taxon>Saccharomycotina</taxon>
        <taxon>Saccharomycetes</taxon>
        <taxon>Saccharomycetales</taxon>
        <taxon>Saccharomycetaceae</taxon>
        <taxon>Kluyveromyces</taxon>
    </lineage>
</organism>
<keyword id="KW-0175">Coiled coil</keyword>
<keyword id="KW-0256">Endoplasmic reticulum</keyword>
<keyword id="KW-0342">GTP-binding</keyword>
<keyword id="KW-0378">Hydrolase</keyword>
<keyword id="KW-0472">Membrane</keyword>
<keyword id="KW-0547">Nucleotide-binding</keyword>
<keyword id="KW-1185">Reference proteome</keyword>
<keyword id="KW-0812">Transmembrane</keyword>
<keyword id="KW-1133">Transmembrane helix</keyword>
<protein>
    <recommendedName>
        <fullName evidence="1">Protein SEY1</fullName>
        <ecNumber evidence="1">3.6.5.-</ecNumber>
    </recommendedName>
</protein>
<proteinExistence type="inferred from homology"/>
<dbReference type="EC" id="3.6.5.-" evidence="1"/>
<dbReference type="EMBL" id="CR382126">
    <property type="protein sequence ID" value="CAG98700.1"/>
    <property type="molecule type" value="Genomic_DNA"/>
</dbReference>
<dbReference type="RefSeq" id="XP_455992.1">
    <property type="nucleotide sequence ID" value="XM_455992.1"/>
</dbReference>
<dbReference type="SMR" id="Q6CJ97"/>
<dbReference type="FunCoup" id="Q6CJ97">
    <property type="interactions" value="71"/>
</dbReference>
<dbReference type="STRING" id="284590.Q6CJ97"/>
<dbReference type="PaxDb" id="284590-Q6CJ97"/>
<dbReference type="KEGG" id="kla:KLLA0_F20317g"/>
<dbReference type="eggNOG" id="KOG2203">
    <property type="taxonomic scope" value="Eukaryota"/>
</dbReference>
<dbReference type="HOGENOM" id="CLU_011270_0_0_1"/>
<dbReference type="InParanoid" id="Q6CJ97"/>
<dbReference type="OMA" id="PIIKMTE"/>
<dbReference type="Proteomes" id="UP000000598">
    <property type="component" value="Chromosome F"/>
</dbReference>
<dbReference type="GO" id="GO:0005789">
    <property type="term" value="C:endoplasmic reticulum membrane"/>
    <property type="evidence" value="ECO:0007669"/>
    <property type="project" value="UniProtKB-SubCell"/>
</dbReference>
<dbReference type="GO" id="GO:0005525">
    <property type="term" value="F:GTP binding"/>
    <property type="evidence" value="ECO:0007669"/>
    <property type="project" value="UniProtKB-UniRule"/>
</dbReference>
<dbReference type="GO" id="GO:0003924">
    <property type="term" value="F:GTPase activity"/>
    <property type="evidence" value="ECO:0007669"/>
    <property type="project" value="UniProtKB-UniRule"/>
</dbReference>
<dbReference type="GO" id="GO:0016320">
    <property type="term" value="P:endoplasmic reticulum membrane fusion"/>
    <property type="evidence" value="ECO:0007669"/>
    <property type="project" value="TreeGrafter"/>
</dbReference>
<dbReference type="CDD" id="cd01851">
    <property type="entry name" value="GBP"/>
    <property type="match status" value="1"/>
</dbReference>
<dbReference type="FunFam" id="3.40.50.300:FF:000727">
    <property type="entry name" value="Protein SEY1 homolog"/>
    <property type="match status" value="1"/>
</dbReference>
<dbReference type="Gene3D" id="3.40.50.300">
    <property type="entry name" value="P-loop containing nucleotide triphosphate hydrolases"/>
    <property type="match status" value="1"/>
</dbReference>
<dbReference type="HAMAP" id="MF_03109">
    <property type="entry name" value="Sey1"/>
    <property type="match status" value="1"/>
</dbReference>
<dbReference type="InterPro" id="IPR030386">
    <property type="entry name" value="G_GB1_RHD3_dom"/>
</dbReference>
<dbReference type="InterPro" id="IPR027417">
    <property type="entry name" value="P-loop_NTPase"/>
</dbReference>
<dbReference type="InterPro" id="IPR008803">
    <property type="entry name" value="RHD3/Sey1"/>
</dbReference>
<dbReference type="InterPro" id="IPR046758">
    <property type="entry name" value="Sey1/RHD3-like_3HB"/>
</dbReference>
<dbReference type="PANTHER" id="PTHR45923">
    <property type="entry name" value="PROTEIN SEY1"/>
    <property type="match status" value="1"/>
</dbReference>
<dbReference type="PANTHER" id="PTHR45923:SF2">
    <property type="entry name" value="PROTEIN SEY1"/>
    <property type="match status" value="1"/>
</dbReference>
<dbReference type="Pfam" id="PF05879">
    <property type="entry name" value="RHD3_GTPase"/>
    <property type="match status" value="1"/>
</dbReference>
<dbReference type="Pfam" id="PF20428">
    <property type="entry name" value="Sey1_3HB"/>
    <property type="match status" value="1"/>
</dbReference>
<dbReference type="SUPFAM" id="SSF52540">
    <property type="entry name" value="P-loop containing nucleoside triphosphate hydrolases"/>
    <property type="match status" value="1"/>
</dbReference>
<dbReference type="PROSITE" id="PS51715">
    <property type="entry name" value="G_GB1_RHD3"/>
    <property type="match status" value="1"/>
</dbReference>
<name>SEY1_KLULA</name>
<accession>Q6CJ97</accession>
<gene>
    <name evidence="1" type="primary">SEY1</name>
    <name type="ordered locus">KLLA0F20317g</name>
</gene>